<organism>
    <name type="scientific">Brucella ovis (strain ATCC 25840 / 63/290 / NCTC 10512)</name>
    <dbReference type="NCBI Taxonomy" id="444178"/>
    <lineage>
        <taxon>Bacteria</taxon>
        <taxon>Pseudomonadati</taxon>
        <taxon>Pseudomonadota</taxon>
        <taxon>Alphaproteobacteria</taxon>
        <taxon>Hyphomicrobiales</taxon>
        <taxon>Brucellaceae</taxon>
        <taxon>Brucella/Ochrobactrum group</taxon>
        <taxon>Brucella</taxon>
    </lineage>
</organism>
<feature type="chain" id="PRO_1000003697" description="Nucleoid-associated protein BOV_0033">
    <location>
        <begin position="1"/>
        <end position="107"/>
    </location>
</feature>
<accession>A5VMY3</accession>
<gene>
    <name type="ordered locus">BOV_0033</name>
</gene>
<reference key="1">
    <citation type="journal article" date="2009" name="PLoS ONE">
        <title>Genome degradation in Brucella ovis corresponds with narrowing of its host range and tissue tropism.</title>
        <authorList>
            <person name="Tsolis R.M."/>
            <person name="Seshadri R."/>
            <person name="Santos R.L."/>
            <person name="Sangari F.J."/>
            <person name="Lobo J.M."/>
            <person name="de Jong M.F."/>
            <person name="Ren Q."/>
            <person name="Myers G."/>
            <person name="Brinkac L.M."/>
            <person name="Nelson W.C."/>
            <person name="Deboy R.T."/>
            <person name="Angiuoli S."/>
            <person name="Khouri H."/>
            <person name="Dimitrov G."/>
            <person name="Robinson J.R."/>
            <person name="Mulligan S."/>
            <person name="Walker R.L."/>
            <person name="Elzer P.E."/>
            <person name="Hassan K.A."/>
            <person name="Paulsen I.T."/>
        </authorList>
    </citation>
    <scope>NUCLEOTIDE SEQUENCE [LARGE SCALE GENOMIC DNA]</scope>
    <source>
        <strain>ATCC 25840 / 63/290 / NCTC 10512</strain>
    </source>
</reference>
<name>Y033_BRUO2</name>
<keyword id="KW-0963">Cytoplasm</keyword>
<keyword id="KW-0238">DNA-binding</keyword>
<comment type="function">
    <text evidence="1">Binds to DNA and alters its conformation. May be involved in regulation of gene expression, nucleoid organization and DNA protection.</text>
</comment>
<comment type="subunit">
    <text evidence="1">Homodimer.</text>
</comment>
<comment type="subcellular location">
    <subcellularLocation>
        <location evidence="1">Cytoplasm</location>
        <location evidence="1">Nucleoid</location>
    </subcellularLocation>
</comment>
<comment type="similarity">
    <text evidence="1">Belongs to the YbaB/EbfC family.</text>
</comment>
<dbReference type="EMBL" id="CP000708">
    <property type="protein sequence ID" value="ABQ61276.1"/>
    <property type="molecule type" value="Genomic_DNA"/>
</dbReference>
<dbReference type="RefSeq" id="WP_002965280.1">
    <property type="nucleotide sequence ID" value="NC_009505.1"/>
</dbReference>
<dbReference type="SMR" id="A5VMY3"/>
<dbReference type="KEGG" id="bov:BOV_0033"/>
<dbReference type="HOGENOM" id="CLU_140930_0_1_5"/>
<dbReference type="PhylomeDB" id="A5VMY3"/>
<dbReference type="Proteomes" id="UP000006383">
    <property type="component" value="Chromosome I"/>
</dbReference>
<dbReference type="GO" id="GO:0043590">
    <property type="term" value="C:bacterial nucleoid"/>
    <property type="evidence" value="ECO:0007669"/>
    <property type="project" value="UniProtKB-UniRule"/>
</dbReference>
<dbReference type="GO" id="GO:0005829">
    <property type="term" value="C:cytosol"/>
    <property type="evidence" value="ECO:0007669"/>
    <property type="project" value="TreeGrafter"/>
</dbReference>
<dbReference type="GO" id="GO:0003677">
    <property type="term" value="F:DNA binding"/>
    <property type="evidence" value="ECO:0007669"/>
    <property type="project" value="UniProtKB-UniRule"/>
</dbReference>
<dbReference type="Gene3D" id="3.30.1310.10">
    <property type="entry name" value="Nucleoid-associated protein YbaB-like domain"/>
    <property type="match status" value="1"/>
</dbReference>
<dbReference type="HAMAP" id="MF_00274">
    <property type="entry name" value="DNA_YbaB_EbfC"/>
    <property type="match status" value="1"/>
</dbReference>
<dbReference type="InterPro" id="IPR036894">
    <property type="entry name" value="YbaB-like_sf"/>
</dbReference>
<dbReference type="InterPro" id="IPR004401">
    <property type="entry name" value="YbaB/EbfC"/>
</dbReference>
<dbReference type="NCBIfam" id="TIGR00103">
    <property type="entry name" value="DNA_YbaB_EbfC"/>
    <property type="match status" value="1"/>
</dbReference>
<dbReference type="PANTHER" id="PTHR33449">
    <property type="entry name" value="NUCLEOID-ASSOCIATED PROTEIN YBAB"/>
    <property type="match status" value="1"/>
</dbReference>
<dbReference type="PANTHER" id="PTHR33449:SF1">
    <property type="entry name" value="NUCLEOID-ASSOCIATED PROTEIN YBAB"/>
    <property type="match status" value="1"/>
</dbReference>
<dbReference type="Pfam" id="PF02575">
    <property type="entry name" value="YbaB_DNA_bd"/>
    <property type="match status" value="1"/>
</dbReference>
<dbReference type="PIRSF" id="PIRSF004555">
    <property type="entry name" value="UCP004555"/>
    <property type="match status" value="1"/>
</dbReference>
<dbReference type="SUPFAM" id="SSF82607">
    <property type="entry name" value="YbaB-like"/>
    <property type="match status" value="1"/>
</dbReference>
<evidence type="ECO:0000255" key="1">
    <source>
        <dbReference type="HAMAP-Rule" id="MF_00274"/>
    </source>
</evidence>
<proteinExistence type="inferred from homology"/>
<sequence>MRDMMGMMKQAKELQAKMKAMQDEIATMEASASSGGGLVTVTLSGKGTLSALKIDPSLMKEDEVEILEDLIIAAHNDAKAKLEAAMAEKTQSLTAGLPIPPGFKLPF</sequence>
<protein>
    <recommendedName>
        <fullName evidence="1">Nucleoid-associated protein BOV_0033</fullName>
    </recommendedName>
</protein>